<name>VSR_TRVPP</name>
<reference key="1">
    <citation type="journal article" date="2001" name="Plant J.">
        <title>Technical Advance. Tobacco rattle virus as a vector for analysis of gene function by silencing.</title>
        <authorList>
            <person name="Ratcliff F."/>
            <person name="Martin-Hernandez A.M."/>
            <person name="Baulcombe D.C."/>
        </authorList>
    </citation>
    <scope>NUCLEOTIDE SEQUENCE [GENOMIC RNA]</scope>
</reference>
<reference key="2">
    <citation type="journal article" date="2002" name="Plant J.">
        <title>Tobacco Rar1, EDS1 and NPR1/NIM1 like genes are required for N-mediated resistance to tobacco mosaic virus.</title>
        <authorList>
            <person name="Liu Y."/>
            <person name="Schiff M."/>
            <person name="Marathe R."/>
            <person name="Dinesh-Kumar S.P."/>
        </authorList>
    </citation>
    <scope>NUCLEOTIDE SEQUENCE [GENOMIC RNA]</scope>
</reference>
<reference key="3">
    <citation type="submission" date="1999-07" db="EMBL/GenBank/DDBJ databases">
        <title>Complete nucleotide sequence of RNA 1 of tobacco rattle virus isolate PpK20.</title>
        <authorList>
            <person name="Visser P.B."/>
            <person name="Bol J.F."/>
        </authorList>
    </citation>
    <scope>NUCLEOTIDE SEQUENCE [GENOMIC RNA]</scope>
</reference>
<reference key="4">
    <citation type="journal article" date="2008" name="J. Virol.">
        <title>Tobacco rattle virus 16-kilodalton protein encodes a suppressor of RNA silencing that allows transient viral entry in meristems.</title>
        <authorList>
            <person name="Martin-Hernandez A.M."/>
            <person name="Baulcombe D.C."/>
        </authorList>
    </citation>
    <scope>FUNCTION</scope>
</reference>
<reference key="5">
    <citation type="journal article" date="2008" name="J. Gen. Virol.">
        <title>Functional characterization and subcellular localization of the 16K cysteine-rich suppressor of gene silencing protein of tobacco rattle virus.</title>
        <authorList>
            <person name="Ghazala W."/>
            <person name="Waltermann A."/>
            <person name="Pilot R."/>
            <person name="Winter S."/>
            <person name="Varrelmann M."/>
        </authorList>
    </citation>
    <scope>NUCLEAR LOCALIZATION SIGNALS</scope>
    <scope>SUBCELLULAR LOCATION</scope>
</reference>
<proteinExistence type="predicted"/>
<dbReference type="EMBL" id="AF314165">
    <property type="protein sequence ID" value="AAG46034.1"/>
    <property type="molecule type" value="Genomic_RNA"/>
</dbReference>
<dbReference type="EMBL" id="AF406990">
    <property type="protein sequence ID" value="AAM50511.1"/>
    <property type="molecule type" value="Genomic_RNA"/>
</dbReference>
<dbReference type="EMBL" id="AF166084">
    <property type="protein sequence ID" value="AAD48029.1"/>
    <property type="molecule type" value="Genomic_RNA"/>
</dbReference>
<dbReference type="RefSeq" id="NP_620672.1">
    <property type="nucleotide sequence ID" value="NC_003805.1"/>
</dbReference>
<dbReference type="SMR" id="Q77JX3"/>
<dbReference type="GeneID" id="962132"/>
<dbReference type="KEGG" id="vg:962132"/>
<dbReference type="Proteomes" id="UP000001669">
    <property type="component" value="Genome"/>
</dbReference>
<dbReference type="GO" id="GO:0030430">
    <property type="term" value="C:host cell cytoplasm"/>
    <property type="evidence" value="ECO:0007669"/>
    <property type="project" value="UniProtKB-SubCell"/>
</dbReference>
<dbReference type="GO" id="GO:0042025">
    <property type="term" value="C:host cell nucleus"/>
    <property type="evidence" value="ECO:0007669"/>
    <property type="project" value="UniProtKB-SubCell"/>
</dbReference>
<dbReference type="GO" id="GO:0052170">
    <property type="term" value="P:symbiont-mediated suppression of host innate immune response"/>
    <property type="evidence" value="ECO:0007669"/>
    <property type="project" value="UniProtKB-KW"/>
</dbReference>
<dbReference type="InterPro" id="IPR007968">
    <property type="entry name" value="Tobacco_rattle_virus_16kDa"/>
</dbReference>
<dbReference type="Pfam" id="PF05304">
    <property type="entry name" value="DUF728"/>
    <property type="match status" value="1"/>
</dbReference>
<comment type="function">
    <text evidence="3">Weak suppressor of RNA-mediated gene silencing, also known as post-transcriptional gene silencing (PTGS), a mechanism of plant viral defense that performs sequence-specific inhibition of viral mRNAs expression. This could be used by the virus to infect efficiently the host the meristem cells.</text>
</comment>
<comment type="subcellular location">
    <subcellularLocation>
        <location evidence="4">Host cytoplasm</location>
    </subcellularLocation>
    <subcellularLocation>
        <location evidence="5">Host nucleus</location>
    </subcellularLocation>
</comment>
<sequence>MTCVLKGCVNEVTVLGHETCSIGHANKLRKQVADMVGVTRRCAENNCGWFVCVVINDFTFDVYNCCGRSHLEKCRKRVETRNREIWKQIRRNQAENMSATAKKSHNSKTSKKKFKEDREFGTPKRFLRDDVPFGIDRLFAF</sequence>
<organism>
    <name type="scientific">Tobacco rattle virus (isolate PpK20)</name>
    <name type="common">TRV</name>
    <dbReference type="NCBI Taxonomy" id="652939"/>
    <lineage>
        <taxon>Viruses</taxon>
        <taxon>Riboviria</taxon>
        <taxon>Orthornavirae</taxon>
        <taxon>Kitrinoviricota</taxon>
        <taxon>Alsuviricetes</taxon>
        <taxon>Martellivirales</taxon>
        <taxon>Virgaviridae</taxon>
        <taxon>Tobravirus</taxon>
        <taxon>Tobacco rattle virus</taxon>
    </lineage>
</organism>
<protein>
    <recommendedName>
        <fullName>Suppressor of RNA silencing</fullName>
    </recommendedName>
    <alternativeName>
        <fullName>16kD cysteine rich protein</fullName>
        <shortName>P16</shortName>
    </alternativeName>
</protein>
<feature type="chain" id="PRO_0000409290" description="Suppressor of RNA silencing">
    <location>
        <begin position="1"/>
        <end position="141"/>
    </location>
</feature>
<feature type="region of interest" description="Disordered" evidence="2">
    <location>
        <begin position="94"/>
        <end position="117"/>
    </location>
</feature>
<feature type="short sequence motif" description="Bipartite nuclear localization signal 1" evidence="1">
    <location>
        <begin position="75"/>
        <end position="91"/>
    </location>
</feature>
<feature type="short sequence motif" description="Bipartite nuclear localization signal 2" evidence="1">
    <location>
        <begin position="111"/>
        <end position="128"/>
    </location>
</feature>
<feature type="compositionally biased region" description="Basic residues" evidence="2">
    <location>
        <begin position="102"/>
        <end position="113"/>
    </location>
</feature>
<accession>Q77JX3</accession>
<organismHost>
    <name type="scientific">Bidens pilosa</name>
    <name type="common">Hairy beggarticks</name>
    <name type="synonym">Cobbler's pegs</name>
    <dbReference type="NCBI Taxonomy" id="42337"/>
</organismHost>
<organismHost>
    <name type="scientific">Capsicum annuum</name>
    <name type="common">Capsicum pepper</name>
    <dbReference type="NCBI Taxonomy" id="4072"/>
</organismHost>
<organismHost>
    <name type="scientific">Cynara cardunculus var. scolymus</name>
    <name type="common">Globe artichoke</name>
    <name type="synonym">Cynara scolymus</name>
    <dbReference type="NCBI Taxonomy" id="59895"/>
</organismHost>
<organismHost>
    <name type="scientific">Solanum lycopersicum</name>
    <name type="common">Tomato</name>
    <name type="synonym">Lycopersicon esculentum</name>
    <dbReference type="NCBI Taxonomy" id="4081"/>
</organismHost>
<keyword id="KW-1035">Host cytoplasm</keyword>
<keyword id="KW-1048">Host nucleus</keyword>
<keyword id="KW-0945">Host-virus interaction</keyword>
<keyword id="KW-1090">Inhibition of host innate immune response by virus</keyword>
<keyword id="KW-1185">Reference proteome</keyword>
<keyword id="KW-0941">Suppressor of RNA silencing</keyword>
<keyword id="KW-0899">Viral immunoevasion</keyword>
<evidence type="ECO:0000255" key="1"/>
<evidence type="ECO:0000256" key="2">
    <source>
        <dbReference type="SAM" id="MobiDB-lite"/>
    </source>
</evidence>
<evidence type="ECO:0000269" key="3">
    <source>
    </source>
</evidence>
<evidence type="ECO:0000269" key="4">
    <source>
    </source>
</evidence>
<evidence type="ECO:0000305" key="5"/>